<gene>
    <name type="primary">hscA</name>
    <name type="ordered locus">RF_1063</name>
</gene>
<organism>
    <name type="scientific">Rickettsia felis (strain ATCC VR-1525 / URRWXCal2)</name>
    <name type="common">Rickettsia azadi</name>
    <dbReference type="NCBI Taxonomy" id="315456"/>
    <lineage>
        <taxon>Bacteria</taxon>
        <taxon>Pseudomonadati</taxon>
        <taxon>Pseudomonadota</taxon>
        <taxon>Alphaproteobacteria</taxon>
        <taxon>Rickettsiales</taxon>
        <taxon>Rickettsiaceae</taxon>
        <taxon>Rickettsieae</taxon>
        <taxon>Rickettsia</taxon>
        <taxon>spotted fever group</taxon>
    </lineage>
</organism>
<feature type="chain" id="PRO_0000288745" description="Chaperone protein HscA homolog">
    <location>
        <begin position="1"/>
        <end position="637"/>
    </location>
</feature>
<feature type="region of interest" description="Insert">
    <location>
        <begin position="335"/>
        <end position="376"/>
    </location>
</feature>
<comment type="function">
    <text evidence="1">Chaperone involved in the maturation of iron-sulfur cluster-containing proteins. Has a low intrinsic ATPase activity which is markedly stimulated by HscB (By similarity).</text>
</comment>
<comment type="similarity">
    <text evidence="2">Belongs to the heat shock protein 70 family.</text>
</comment>
<proteinExistence type="inferred from homology"/>
<accession>Q4UKL3</accession>
<name>HSCA_RICFE</name>
<reference key="1">
    <citation type="journal article" date="2005" name="PLoS Biol.">
        <title>The genome sequence of Rickettsia felis identifies the first putative conjugative plasmid in an obligate intracellular parasite.</title>
        <authorList>
            <person name="Ogata H."/>
            <person name="Renesto P."/>
            <person name="Audic S."/>
            <person name="Robert C."/>
            <person name="Blanc G."/>
            <person name="Fournier P.-E."/>
            <person name="Parinello H."/>
            <person name="Claverie J.-M."/>
            <person name="Raoult D."/>
        </authorList>
    </citation>
    <scope>NUCLEOTIDE SEQUENCE [LARGE SCALE GENOMIC DNA]</scope>
    <source>
        <strain>ATCC VR-1525 / URRWXCal2</strain>
    </source>
</reference>
<evidence type="ECO:0000250" key="1"/>
<evidence type="ECO:0000305" key="2"/>
<keyword id="KW-0067">ATP-binding</keyword>
<keyword id="KW-0547">Nucleotide-binding</keyword>
<keyword id="KW-0346">Stress response</keyword>
<protein>
    <recommendedName>
        <fullName>Chaperone protein HscA homolog</fullName>
    </recommendedName>
</protein>
<sequence>MQIIEITEPEQADFKQERQIAVGIDFGTTNSLIAIATNRKVKVIKSRDDKELIPTTIDFTNENFIIGNNKGLRSIKRLFGKTLKEILNTPALFSLIKDYLEANSSELKLNFANKQLRISEIAAEVFIYLKNQAEEQLKTNITKAVITVPAHFNDAARGEVMLAAKIAGFEVLRLIAEPTAAAYAYGLNKNQKGCYLVYDLGGGTFDVSILNIQEGIFQVIATNGDNMLGGDDIDVVITQYLCNKFDLPNSVDTLQLAKKAKETLTYKDSFNNDNISINKQTLEQLILPLVERTINIAKECLEQAGNPKIDGIILVGGATRTPLIKTELSKAFKVQHISKRFRQDEFKGEPAGRIKIREHRQVLQNSLVSNFMEYAVDILSDIDPDKAVVWGAALQAENLTAPHTNSLLIDVVPLSLGVELYGGIVEKIIMRNTPIPISVVKEFTTYADNQTGIQFHILQGEREMAVDCRSLARFELKGLPPMKAGNIRAEVTFAIDADGILSVSAYEKISNTSHTIEVKPNHGIDKTEIDIMLENAYKNAKIDYTTRLLQEAIIEAEALIFSIERAIAELTALLSESEISIINSLLDNIKEAAHARDRILINNSIKEFKSKIKKSMNTKLNIIINDLLKGKNINQTK</sequence>
<dbReference type="EMBL" id="CP000053">
    <property type="protein sequence ID" value="AAY61914.1"/>
    <property type="molecule type" value="Genomic_DNA"/>
</dbReference>
<dbReference type="SMR" id="Q4UKL3"/>
<dbReference type="STRING" id="315456.RF_1063"/>
<dbReference type="KEGG" id="rfe:RF_1063"/>
<dbReference type="eggNOG" id="COG0443">
    <property type="taxonomic scope" value="Bacteria"/>
</dbReference>
<dbReference type="HOGENOM" id="CLU_005965_2_1_5"/>
<dbReference type="OrthoDB" id="9766019at2"/>
<dbReference type="Proteomes" id="UP000008548">
    <property type="component" value="Chromosome"/>
</dbReference>
<dbReference type="GO" id="GO:0005524">
    <property type="term" value="F:ATP binding"/>
    <property type="evidence" value="ECO:0007669"/>
    <property type="project" value="UniProtKB-KW"/>
</dbReference>
<dbReference type="GO" id="GO:0140662">
    <property type="term" value="F:ATP-dependent protein folding chaperone"/>
    <property type="evidence" value="ECO:0007669"/>
    <property type="project" value="InterPro"/>
</dbReference>
<dbReference type="Gene3D" id="1.20.1270.10">
    <property type="match status" value="1"/>
</dbReference>
<dbReference type="Gene3D" id="3.30.420.40">
    <property type="match status" value="2"/>
</dbReference>
<dbReference type="Gene3D" id="3.90.640.10">
    <property type="entry name" value="Actin, Chain A, domain 4"/>
    <property type="match status" value="1"/>
</dbReference>
<dbReference type="Gene3D" id="2.60.34.10">
    <property type="entry name" value="Substrate Binding Domain Of DNAk, Chain A, domain 1"/>
    <property type="match status" value="1"/>
</dbReference>
<dbReference type="InterPro" id="IPR043129">
    <property type="entry name" value="ATPase_NBD"/>
</dbReference>
<dbReference type="InterPro" id="IPR018181">
    <property type="entry name" value="Heat_shock_70_CS"/>
</dbReference>
<dbReference type="InterPro" id="IPR029048">
    <property type="entry name" value="HSP70_C_sf"/>
</dbReference>
<dbReference type="InterPro" id="IPR029047">
    <property type="entry name" value="HSP70_peptide-bd_sf"/>
</dbReference>
<dbReference type="InterPro" id="IPR013126">
    <property type="entry name" value="Hsp_70_fam"/>
</dbReference>
<dbReference type="InterPro" id="IPR022437">
    <property type="entry name" value="RPE3"/>
</dbReference>
<dbReference type="NCBIfam" id="NF002399">
    <property type="entry name" value="PRK01433.1"/>
    <property type="match status" value="1"/>
</dbReference>
<dbReference type="NCBIfam" id="TIGR03775">
    <property type="entry name" value="RPE3"/>
    <property type="match status" value="1"/>
</dbReference>
<dbReference type="PANTHER" id="PTHR19375">
    <property type="entry name" value="HEAT SHOCK PROTEIN 70KDA"/>
    <property type="match status" value="1"/>
</dbReference>
<dbReference type="Pfam" id="PF00012">
    <property type="entry name" value="HSP70"/>
    <property type="match status" value="2"/>
</dbReference>
<dbReference type="PRINTS" id="PR00301">
    <property type="entry name" value="HEATSHOCK70"/>
</dbReference>
<dbReference type="SUPFAM" id="SSF53067">
    <property type="entry name" value="Actin-like ATPase domain"/>
    <property type="match status" value="2"/>
</dbReference>
<dbReference type="SUPFAM" id="SSF100934">
    <property type="entry name" value="Heat shock protein 70kD (HSP70), C-terminal subdomain"/>
    <property type="match status" value="1"/>
</dbReference>
<dbReference type="SUPFAM" id="SSF100920">
    <property type="entry name" value="Heat shock protein 70kD (HSP70), peptide-binding domain"/>
    <property type="match status" value="1"/>
</dbReference>
<dbReference type="PROSITE" id="PS00329">
    <property type="entry name" value="HSP70_2"/>
    <property type="match status" value="1"/>
</dbReference>